<accession>A1A0A9</accession>
<gene>
    <name evidence="1" type="primary">rpiA</name>
    <name type="ordered locus">BAD_0361</name>
</gene>
<dbReference type="EC" id="5.3.1.6" evidence="1"/>
<dbReference type="EMBL" id="AP009256">
    <property type="protein sequence ID" value="BAF39142.1"/>
    <property type="molecule type" value="Genomic_DNA"/>
</dbReference>
<dbReference type="RefSeq" id="WP_011742841.1">
    <property type="nucleotide sequence ID" value="NZ_CAXVNC010000001.1"/>
</dbReference>
<dbReference type="SMR" id="A1A0A9"/>
<dbReference type="STRING" id="367928.BAD_0361"/>
<dbReference type="PaxDb" id="1680-BADO_0367"/>
<dbReference type="GeneID" id="4557363"/>
<dbReference type="KEGG" id="bad:BAD_0361"/>
<dbReference type="HOGENOM" id="CLU_056590_1_0_11"/>
<dbReference type="UniPathway" id="UPA00115">
    <property type="reaction ID" value="UER00412"/>
</dbReference>
<dbReference type="Proteomes" id="UP000008702">
    <property type="component" value="Chromosome"/>
</dbReference>
<dbReference type="GO" id="GO:0005829">
    <property type="term" value="C:cytosol"/>
    <property type="evidence" value="ECO:0007669"/>
    <property type="project" value="TreeGrafter"/>
</dbReference>
<dbReference type="GO" id="GO:0004751">
    <property type="term" value="F:ribose-5-phosphate isomerase activity"/>
    <property type="evidence" value="ECO:0007669"/>
    <property type="project" value="UniProtKB-UniRule"/>
</dbReference>
<dbReference type="GO" id="GO:0006014">
    <property type="term" value="P:D-ribose metabolic process"/>
    <property type="evidence" value="ECO:0007669"/>
    <property type="project" value="TreeGrafter"/>
</dbReference>
<dbReference type="GO" id="GO:0009052">
    <property type="term" value="P:pentose-phosphate shunt, non-oxidative branch"/>
    <property type="evidence" value="ECO:0007669"/>
    <property type="project" value="UniProtKB-UniRule"/>
</dbReference>
<dbReference type="CDD" id="cd01398">
    <property type="entry name" value="RPI_A"/>
    <property type="match status" value="1"/>
</dbReference>
<dbReference type="FunFam" id="3.40.50.1360:FF:000001">
    <property type="entry name" value="Ribose-5-phosphate isomerase A"/>
    <property type="match status" value="1"/>
</dbReference>
<dbReference type="Gene3D" id="3.30.70.260">
    <property type="match status" value="1"/>
</dbReference>
<dbReference type="Gene3D" id="3.40.50.1360">
    <property type="match status" value="1"/>
</dbReference>
<dbReference type="HAMAP" id="MF_00170">
    <property type="entry name" value="Rib_5P_isom_A"/>
    <property type="match status" value="1"/>
</dbReference>
<dbReference type="InterPro" id="IPR037171">
    <property type="entry name" value="NagB/RpiA_transferase-like"/>
</dbReference>
<dbReference type="InterPro" id="IPR020672">
    <property type="entry name" value="Ribose5P_isomerase_typA_subgr"/>
</dbReference>
<dbReference type="InterPro" id="IPR004788">
    <property type="entry name" value="Ribose5P_isomerase_type_A"/>
</dbReference>
<dbReference type="NCBIfam" id="NF001924">
    <property type="entry name" value="PRK00702.1"/>
    <property type="match status" value="1"/>
</dbReference>
<dbReference type="NCBIfam" id="TIGR00021">
    <property type="entry name" value="rpiA"/>
    <property type="match status" value="1"/>
</dbReference>
<dbReference type="PANTHER" id="PTHR11934">
    <property type="entry name" value="RIBOSE-5-PHOSPHATE ISOMERASE"/>
    <property type="match status" value="1"/>
</dbReference>
<dbReference type="PANTHER" id="PTHR11934:SF0">
    <property type="entry name" value="RIBOSE-5-PHOSPHATE ISOMERASE"/>
    <property type="match status" value="1"/>
</dbReference>
<dbReference type="Pfam" id="PF06026">
    <property type="entry name" value="Rib_5-P_isom_A"/>
    <property type="match status" value="1"/>
</dbReference>
<dbReference type="SUPFAM" id="SSF75445">
    <property type="entry name" value="D-ribose-5-phosphate isomerase (RpiA), lid domain"/>
    <property type="match status" value="1"/>
</dbReference>
<dbReference type="SUPFAM" id="SSF100950">
    <property type="entry name" value="NagB/RpiA/CoA transferase-like"/>
    <property type="match status" value="1"/>
</dbReference>
<proteinExistence type="inferred from homology"/>
<reference key="1">
    <citation type="submission" date="2006-12" db="EMBL/GenBank/DDBJ databases">
        <title>Bifidobacterium adolescentis complete genome sequence.</title>
        <authorList>
            <person name="Suzuki T."/>
            <person name="Tsuda Y."/>
            <person name="Kanou N."/>
            <person name="Inoue T."/>
            <person name="Kumazaki K."/>
            <person name="Nagano S."/>
            <person name="Hirai S."/>
            <person name="Tanaka K."/>
            <person name="Watanabe K."/>
        </authorList>
    </citation>
    <scope>NUCLEOTIDE SEQUENCE [LARGE SCALE GENOMIC DNA]</scope>
    <source>
        <strain>ATCC 15703 / DSM 20083 / NCTC 11814 / E194a</strain>
    </source>
</reference>
<evidence type="ECO:0000255" key="1">
    <source>
        <dbReference type="HAMAP-Rule" id="MF_00170"/>
    </source>
</evidence>
<organism>
    <name type="scientific">Bifidobacterium adolescentis (strain ATCC 15703 / DSM 20083 / NCTC 11814 / E194a)</name>
    <dbReference type="NCBI Taxonomy" id="367928"/>
    <lineage>
        <taxon>Bacteria</taxon>
        <taxon>Bacillati</taxon>
        <taxon>Actinomycetota</taxon>
        <taxon>Actinomycetes</taxon>
        <taxon>Bifidobacteriales</taxon>
        <taxon>Bifidobacteriaceae</taxon>
        <taxon>Bifidobacterium</taxon>
    </lineage>
</organism>
<name>RPIA_BIFAA</name>
<protein>
    <recommendedName>
        <fullName evidence="1">Ribose-5-phosphate isomerase A</fullName>
        <ecNumber evidence="1">5.3.1.6</ecNumber>
    </recommendedName>
    <alternativeName>
        <fullName evidence="1">Phosphoriboisomerase A</fullName>
        <shortName evidence="1">PRI</shortName>
    </alternativeName>
</protein>
<keyword id="KW-0413">Isomerase</keyword>
<keyword id="KW-1185">Reference proteome</keyword>
<comment type="function">
    <text evidence="1">Catalyzes the reversible conversion of ribose-5-phosphate to ribulose 5-phosphate.</text>
</comment>
<comment type="catalytic activity">
    <reaction evidence="1">
        <text>aldehydo-D-ribose 5-phosphate = D-ribulose 5-phosphate</text>
        <dbReference type="Rhea" id="RHEA:14657"/>
        <dbReference type="ChEBI" id="CHEBI:58121"/>
        <dbReference type="ChEBI" id="CHEBI:58273"/>
        <dbReference type="EC" id="5.3.1.6"/>
    </reaction>
</comment>
<comment type="pathway">
    <text evidence="1">Carbohydrate degradation; pentose phosphate pathway; D-ribose 5-phosphate from D-ribulose 5-phosphate (non-oxidative stage): step 1/1.</text>
</comment>
<comment type="subunit">
    <text evidence="1">Homodimer.</text>
</comment>
<comment type="similarity">
    <text evidence="1">Belongs to the ribose 5-phosphate isomerase family.</text>
</comment>
<feature type="chain" id="PRO_1000058296" description="Ribose-5-phosphate isomerase A">
    <location>
        <begin position="1"/>
        <end position="232"/>
    </location>
</feature>
<feature type="active site" description="Proton acceptor" evidence="1">
    <location>
        <position position="109"/>
    </location>
</feature>
<feature type="binding site" evidence="1">
    <location>
        <begin position="31"/>
        <end position="34"/>
    </location>
    <ligand>
        <name>substrate</name>
    </ligand>
</feature>
<feature type="binding site" evidence="1">
    <location>
        <begin position="87"/>
        <end position="90"/>
    </location>
    <ligand>
        <name>substrate</name>
    </ligand>
</feature>
<feature type="binding site" evidence="1">
    <location>
        <begin position="100"/>
        <end position="103"/>
    </location>
    <ligand>
        <name>substrate</name>
    </ligand>
</feature>
<feature type="binding site" evidence="1">
    <location>
        <position position="127"/>
    </location>
    <ligand>
        <name>substrate</name>
    </ligand>
</feature>
<sequence length="232" mass="25267">MDKAQQDALKKAAGIEAAKLIQNGMIAGLGTGSTVRFLVDELGRRVKEEGLEFTGVTTSRRTQEQAEGYGIKIVNIDDVDHIDVTIDGADEVDKNFNGIKGGGAALLWEKIVATNSNKIVWIVDESKVVDTIGKFPLPVEVIPFGAGQVVKKFEAKGYKPVLRLDANGEPVRTDENNYVVDLHLERIDHPQELAQDLITTVGVVEHGLFLNMVDQVIVGDPNGPRVMDNPNK</sequence>